<accession>A1JLG0</accession>
<feature type="chain" id="PRO_5000201043" description="NADH-quinone oxidoreductase subunit A">
    <location>
        <begin position="1"/>
        <end position="150"/>
    </location>
</feature>
<feature type="transmembrane region" description="Helical" evidence="1">
    <location>
        <begin position="14"/>
        <end position="34"/>
    </location>
</feature>
<feature type="transmembrane region" description="Helical" evidence="1">
    <location>
        <begin position="66"/>
        <end position="86"/>
    </location>
</feature>
<feature type="transmembrane region" description="Helical" evidence="1">
    <location>
        <begin position="96"/>
        <end position="116"/>
    </location>
</feature>
<dbReference type="EC" id="7.1.1.-" evidence="1"/>
<dbReference type="EMBL" id="AM286415">
    <property type="protein sequence ID" value="CAL11432.1"/>
    <property type="molecule type" value="Genomic_DNA"/>
</dbReference>
<dbReference type="RefSeq" id="YP_001005660.1">
    <property type="nucleotide sequence ID" value="NC_008800.1"/>
</dbReference>
<dbReference type="SMR" id="A1JLG0"/>
<dbReference type="KEGG" id="yen:YE1344"/>
<dbReference type="PATRIC" id="fig|393305.7.peg.1463"/>
<dbReference type="eggNOG" id="COG0838">
    <property type="taxonomic scope" value="Bacteria"/>
</dbReference>
<dbReference type="HOGENOM" id="CLU_119549_2_1_6"/>
<dbReference type="OrthoDB" id="9791970at2"/>
<dbReference type="Proteomes" id="UP000000642">
    <property type="component" value="Chromosome"/>
</dbReference>
<dbReference type="GO" id="GO:0030964">
    <property type="term" value="C:NADH dehydrogenase complex"/>
    <property type="evidence" value="ECO:0007669"/>
    <property type="project" value="TreeGrafter"/>
</dbReference>
<dbReference type="GO" id="GO:0005886">
    <property type="term" value="C:plasma membrane"/>
    <property type="evidence" value="ECO:0007669"/>
    <property type="project" value="UniProtKB-SubCell"/>
</dbReference>
<dbReference type="GO" id="GO:0008137">
    <property type="term" value="F:NADH dehydrogenase (ubiquinone) activity"/>
    <property type="evidence" value="ECO:0007669"/>
    <property type="project" value="InterPro"/>
</dbReference>
<dbReference type="GO" id="GO:0050136">
    <property type="term" value="F:NADH:ubiquinone reductase (non-electrogenic) activity"/>
    <property type="evidence" value="ECO:0007669"/>
    <property type="project" value="UniProtKB-UniRule"/>
</dbReference>
<dbReference type="GO" id="GO:0048038">
    <property type="term" value="F:quinone binding"/>
    <property type="evidence" value="ECO:0007669"/>
    <property type="project" value="UniProtKB-KW"/>
</dbReference>
<dbReference type="FunFam" id="1.20.58.1610:FF:000003">
    <property type="entry name" value="NADH-quinone oxidoreductase subunit A"/>
    <property type="match status" value="1"/>
</dbReference>
<dbReference type="Gene3D" id="1.20.58.1610">
    <property type="entry name" value="NADH:ubiquinone/plastoquinone oxidoreductase, chain 3"/>
    <property type="match status" value="1"/>
</dbReference>
<dbReference type="HAMAP" id="MF_01394">
    <property type="entry name" value="NDH1_NuoA"/>
    <property type="match status" value="1"/>
</dbReference>
<dbReference type="InterPro" id="IPR023043">
    <property type="entry name" value="NAD(P)H_OxRDtase_bac/plastid"/>
</dbReference>
<dbReference type="InterPro" id="IPR000440">
    <property type="entry name" value="NADH_UbQ/plastoQ_OxRdtase_su3"/>
</dbReference>
<dbReference type="InterPro" id="IPR038430">
    <property type="entry name" value="NDAH_ubi_oxred_su3_sf"/>
</dbReference>
<dbReference type="PANTHER" id="PTHR11058:SF21">
    <property type="entry name" value="NADH-QUINONE OXIDOREDUCTASE SUBUNIT A"/>
    <property type="match status" value="1"/>
</dbReference>
<dbReference type="PANTHER" id="PTHR11058">
    <property type="entry name" value="NADH-UBIQUINONE OXIDOREDUCTASE CHAIN 3"/>
    <property type="match status" value="1"/>
</dbReference>
<dbReference type="Pfam" id="PF00507">
    <property type="entry name" value="Oxidored_q4"/>
    <property type="match status" value="1"/>
</dbReference>
<organism>
    <name type="scientific">Yersinia enterocolitica serotype O:8 / biotype 1B (strain NCTC 13174 / 8081)</name>
    <dbReference type="NCBI Taxonomy" id="393305"/>
    <lineage>
        <taxon>Bacteria</taxon>
        <taxon>Pseudomonadati</taxon>
        <taxon>Pseudomonadota</taxon>
        <taxon>Gammaproteobacteria</taxon>
        <taxon>Enterobacterales</taxon>
        <taxon>Yersiniaceae</taxon>
        <taxon>Yersinia</taxon>
    </lineage>
</organism>
<sequence>MSTTTEVIAHHWAFAVFLIGAIGLCGLMLLGAFFLGGRARARAKNVPYESGIDSVGSARMRLSAKFYLVAMFFVIFDVEALYLYAWSISIRESGWIGFIEATIFILVLLAGLVYLVRIGALDWTPGRSNRRVSKPSIVKYASSHPDIPKN</sequence>
<comment type="function">
    <text evidence="1">NDH-1 shuttles electrons from NADH, via FMN and iron-sulfur (Fe-S) centers, to quinones in the respiratory chain. The immediate electron acceptor for the enzyme in this species is believed to be ubiquinone. Couples the redox reaction to proton translocation (for every two electrons transferred, four hydrogen ions are translocated across the cytoplasmic membrane), and thus conserves the redox energy in a proton gradient.</text>
</comment>
<comment type="catalytic activity">
    <reaction evidence="1">
        <text>a quinone + NADH + 5 H(+)(in) = a quinol + NAD(+) + 4 H(+)(out)</text>
        <dbReference type="Rhea" id="RHEA:57888"/>
        <dbReference type="ChEBI" id="CHEBI:15378"/>
        <dbReference type="ChEBI" id="CHEBI:24646"/>
        <dbReference type="ChEBI" id="CHEBI:57540"/>
        <dbReference type="ChEBI" id="CHEBI:57945"/>
        <dbReference type="ChEBI" id="CHEBI:132124"/>
    </reaction>
</comment>
<comment type="subunit">
    <text evidence="1">NDH-1 is composed of 13 different subunits. Subunits NuoA, H, J, K, L, M, N constitute the membrane sector of the complex.</text>
</comment>
<comment type="subcellular location">
    <subcellularLocation>
        <location evidence="1">Cell inner membrane</location>
        <topology evidence="1">Multi-pass membrane protein</topology>
    </subcellularLocation>
</comment>
<comment type="similarity">
    <text evidence="1">Belongs to the complex I subunit 3 family.</text>
</comment>
<evidence type="ECO:0000255" key="1">
    <source>
        <dbReference type="HAMAP-Rule" id="MF_01394"/>
    </source>
</evidence>
<proteinExistence type="inferred from homology"/>
<name>NUOA_YERE8</name>
<protein>
    <recommendedName>
        <fullName evidence="1">NADH-quinone oxidoreductase subunit A</fullName>
        <ecNumber evidence="1">7.1.1.-</ecNumber>
    </recommendedName>
    <alternativeName>
        <fullName evidence="1">NADH dehydrogenase I subunit A</fullName>
    </alternativeName>
    <alternativeName>
        <fullName evidence="1">NDH-1 subunit A</fullName>
    </alternativeName>
    <alternativeName>
        <fullName evidence="1">NUO1</fullName>
    </alternativeName>
</protein>
<keyword id="KW-0997">Cell inner membrane</keyword>
<keyword id="KW-1003">Cell membrane</keyword>
<keyword id="KW-0472">Membrane</keyword>
<keyword id="KW-0520">NAD</keyword>
<keyword id="KW-0874">Quinone</keyword>
<keyword id="KW-1278">Translocase</keyword>
<keyword id="KW-0812">Transmembrane</keyword>
<keyword id="KW-1133">Transmembrane helix</keyword>
<keyword id="KW-0813">Transport</keyword>
<keyword id="KW-0830">Ubiquinone</keyword>
<gene>
    <name evidence="1" type="primary">nuoA</name>
    <name type="ordered locus">YE1344</name>
</gene>
<reference key="1">
    <citation type="journal article" date="2006" name="PLoS Genet.">
        <title>The complete genome sequence and comparative genome analysis of the high pathogenicity Yersinia enterocolitica strain 8081.</title>
        <authorList>
            <person name="Thomson N.R."/>
            <person name="Howard S."/>
            <person name="Wren B.W."/>
            <person name="Holden M.T.G."/>
            <person name="Crossman L."/>
            <person name="Challis G.L."/>
            <person name="Churcher C."/>
            <person name="Mungall K."/>
            <person name="Brooks K."/>
            <person name="Chillingworth T."/>
            <person name="Feltwell T."/>
            <person name="Abdellah Z."/>
            <person name="Hauser H."/>
            <person name="Jagels K."/>
            <person name="Maddison M."/>
            <person name="Moule S."/>
            <person name="Sanders M."/>
            <person name="Whitehead S."/>
            <person name="Quail M.A."/>
            <person name="Dougan G."/>
            <person name="Parkhill J."/>
            <person name="Prentice M.B."/>
        </authorList>
    </citation>
    <scope>NUCLEOTIDE SEQUENCE [LARGE SCALE GENOMIC DNA]</scope>
    <source>
        <strain>NCTC 13174 / 8081</strain>
    </source>
</reference>